<sequence length="185" mass="20418">MRIGLYGGSFNPAHAGHLHVSRTALRRLRLDRVWWLVTPGNPLKDHGVLAPLDERVAQARALATDPRIAVTGFEGGIGSRYTADTLRWLVRRQPALHFVWIMGADSLGTFHRWRRFDEILSLMPVAVIDRPGYTLTAPSARAAQAFASARIPEADAPTLATRPTPAWAFLHGPRSALSSTALRTR</sequence>
<dbReference type="EC" id="2.7.7.18" evidence="1"/>
<dbReference type="EMBL" id="CP001298">
    <property type="protein sequence ID" value="ACK83933.1"/>
    <property type="molecule type" value="Genomic_DNA"/>
</dbReference>
<dbReference type="SMR" id="B7KS48"/>
<dbReference type="KEGG" id="mch:Mchl_3095"/>
<dbReference type="HOGENOM" id="CLU_069765_2_0_5"/>
<dbReference type="UniPathway" id="UPA00253">
    <property type="reaction ID" value="UER00332"/>
</dbReference>
<dbReference type="Proteomes" id="UP000002385">
    <property type="component" value="Chromosome"/>
</dbReference>
<dbReference type="GO" id="GO:0005524">
    <property type="term" value="F:ATP binding"/>
    <property type="evidence" value="ECO:0007669"/>
    <property type="project" value="UniProtKB-KW"/>
</dbReference>
<dbReference type="GO" id="GO:0004515">
    <property type="term" value="F:nicotinate-nucleotide adenylyltransferase activity"/>
    <property type="evidence" value="ECO:0007669"/>
    <property type="project" value="UniProtKB-UniRule"/>
</dbReference>
<dbReference type="GO" id="GO:0009435">
    <property type="term" value="P:NAD biosynthetic process"/>
    <property type="evidence" value="ECO:0007669"/>
    <property type="project" value="UniProtKB-UniRule"/>
</dbReference>
<dbReference type="CDD" id="cd02165">
    <property type="entry name" value="NMNAT"/>
    <property type="match status" value="1"/>
</dbReference>
<dbReference type="Gene3D" id="3.40.50.620">
    <property type="entry name" value="HUPs"/>
    <property type="match status" value="1"/>
</dbReference>
<dbReference type="HAMAP" id="MF_00244">
    <property type="entry name" value="NaMN_adenylyltr"/>
    <property type="match status" value="1"/>
</dbReference>
<dbReference type="InterPro" id="IPR004821">
    <property type="entry name" value="Cyt_trans-like"/>
</dbReference>
<dbReference type="InterPro" id="IPR005248">
    <property type="entry name" value="NadD/NMNAT"/>
</dbReference>
<dbReference type="InterPro" id="IPR014729">
    <property type="entry name" value="Rossmann-like_a/b/a_fold"/>
</dbReference>
<dbReference type="NCBIfam" id="TIGR00482">
    <property type="entry name" value="nicotinate (nicotinamide) nucleotide adenylyltransferase"/>
    <property type="match status" value="1"/>
</dbReference>
<dbReference type="NCBIfam" id="NF000843">
    <property type="entry name" value="PRK00071.2-2"/>
    <property type="match status" value="1"/>
</dbReference>
<dbReference type="NCBIfam" id="NF000845">
    <property type="entry name" value="PRK00071.2-4"/>
    <property type="match status" value="1"/>
</dbReference>
<dbReference type="PANTHER" id="PTHR39321">
    <property type="entry name" value="NICOTINATE-NUCLEOTIDE ADENYLYLTRANSFERASE-RELATED"/>
    <property type="match status" value="1"/>
</dbReference>
<dbReference type="PANTHER" id="PTHR39321:SF3">
    <property type="entry name" value="PHOSPHOPANTETHEINE ADENYLYLTRANSFERASE"/>
    <property type="match status" value="1"/>
</dbReference>
<dbReference type="Pfam" id="PF01467">
    <property type="entry name" value="CTP_transf_like"/>
    <property type="match status" value="1"/>
</dbReference>
<dbReference type="SUPFAM" id="SSF52374">
    <property type="entry name" value="Nucleotidylyl transferase"/>
    <property type="match status" value="1"/>
</dbReference>
<evidence type="ECO:0000255" key="1">
    <source>
        <dbReference type="HAMAP-Rule" id="MF_00244"/>
    </source>
</evidence>
<gene>
    <name evidence="1" type="primary">nadD</name>
    <name type="ordered locus">Mchl_3095</name>
</gene>
<feature type="chain" id="PRO_1000125354" description="Probable nicotinate-nucleotide adenylyltransferase">
    <location>
        <begin position="1"/>
        <end position="185"/>
    </location>
</feature>
<keyword id="KW-0067">ATP-binding</keyword>
<keyword id="KW-0520">NAD</keyword>
<keyword id="KW-0547">Nucleotide-binding</keyword>
<keyword id="KW-0548">Nucleotidyltransferase</keyword>
<keyword id="KW-0662">Pyridine nucleotide biosynthesis</keyword>
<keyword id="KW-0808">Transferase</keyword>
<comment type="function">
    <text evidence="1">Catalyzes the reversible adenylation of nicotinate mononucleotide (NaMN) to nicotinic acid adenine dinucleotide (NaAD).</text>
</comment>
<comment type="catalytic activity">
    <reaction evidence="1">
        <text>nicotinate beta-D-ribonucleotide + ATP + H(+) = deamido-NAD(+) + diphosphate</text>
        <dbReference type="Rhea" id="RHEA:22860"/>
        <dbReference type="ChEBI" id="CHEBI:15378"/>
        <dbReference type="ChEBI" id="CHEBI:30616"/>
        <dbReference type="ChEBI" id="CHEBI:33019"/>
        <dbReference type="ChEBI" id="CHEBI:57502"/>
        <dbReference type="ChEBI" id="CHEBI:58437"/>
        <dbReference type="EC" id="2.7.7.18"/>
    </reaction>
</comment>
<comment type="pathway">
    <text evidence="1">Cofactor biosynthesis; NAD(+) biosynthesis; deamido-NAD(+) from nicotinate D-ribonucleotide: step 1/1.</text>
</comment>
<comment type="similarity">
    <text evidence="1">Belongs to the NadD family.</text>
</comment>
<accession>B7KS48</accession>
<reference key="1">
    <citation type="submission" date="2008-12" db="EMBL/GenBank/DDBJ databases">
        <title>Complete sequence of chromosome of Methylobacterium chloromethanicum CM4.</title>
        <authorList>
            <consortium name="US DOE Joint Genome Institute"/>
            <person name="Lucas S."/>
            <person name="Copeland A."/>
            <person name="Lapidus A."/>
            <person name="Glavina del Rio T."/>
            <person name="Dalin E."/>
            <person name="Tice H."/>
            <person name="Bruce D."/>
            <person name="Goodwin L."/>
            <person name="Pitluck S."/>
            <person name="Chertkov O."/>
            <person name="Brettin T."/>
            <person name="Detter J.C."/>
            <person name="Han C."/>
            <person name="Larimer F."/>
            <person name="Land M."/>
            <person name="Hauser L."/>
            <person name="Kyrpides N."/>
            <person name="Mikhailova N."/>
            <person name="Marx C."/>
            <person name="Richardson P."/>
        </authorList>
    </citation>
    <scope>NUCLEOTIDE SEQUENCE [LARGE SCALE GENOMIC DNA]</scope>
    <source>
        <strain>CM4 / NCIMB 13688</strain>
    </source>
</reference>
<protein>
    <recommendedName>
        <fullName evidence="1">Probable nicotinate-nucleotide adenylyltransferase</fullName>
        <ecNumber evidence="1">2.7.7.18</ecNumber>
    </recommendedName>
    <alternativeName>
        <fullName evidence="1">Deamido-NAD(+) diphosphorylase</fullName>
    </alternativeName>
    <alternativeName>
        <fullName evidence="1">Deamido-NAD(+) pyrophosphorylase</fullName>
    </alternativeName>
    <alternativeName>
        <fullName evidence="1">Nicotinate mononucleotide adenylyltransferase</fullName>
        <shortName evidence="1">NaMN adenylyltransferase</shortName>
    </alternativeName>
</protein>
<name>NADD_METC4</name>
<proteinExistence type="inferred from homology"/>
<organism>
    <name type="scientific">Methylorubrum extorquens (strain CM4 / NCIMB 13688)</name>
    <name type="common">Methylobacterium extorquens</name>
    <dbReference type="NCBI Taxonomy" id="440085"/>
    <lineage>
        <taxon>Bacteria</taxon>
        <taxon>Pseudomonadati</taxon>
        <taxon>Pseudomonadota</taxon>
        <taxon>Alphaproteobacteria</taxon>
        <taxon>Hyphomicrobiales</taxon>
        <taxon>Methylobacteriaceae</taxon>
        <taxon>Methylorubrum</taxon>
    </lineage>
</organism>